<accession>Q21YD1</accession>
<name>PNP_ALBFT</name>
<sequence>MSIFNKVTKTFQWGQNTVTMETGEIARQASGAVLLDMDGTVVLATVVAKTEGKAGQDFFPLTVDYLEKTYAAGKIPGSFFKREGRPSEFETLTSRLIDRPIRPLFPEGFFNEVHVVVHTLSLNPEVDADIAALIAVSAALSVSGIPFSGPIGAARVGYINGEYVLNPGQTARKDSVMDLVVAGTEAAVLMVESEAQQLSEEIMLGAVVFGHEQGNIAINAIHELVRDAGKPVWDWKAPAKDEPLIAKVGALAAHKLEAAYQIRNKQARTRACREAYAVVMADLKLDGVAFDSVAVEGMLFDIEAKIVRSQILAGEPRIDGRDTRTVRPIEIRNSVLPRTHGSALFTRGETQALVVTTLGTERDAQRIDALSGDYEDRFMLHYNMPPFATGETGRVGTPKRREIGHGRLAKRALMAVLPSKEEFPYTMRVVSEITESNGSSSMASVCGGCLSLMDAGVPMKAHVAGIAMGLIKEENRFAVLTDILGDEDHLGDMDFKVAGTTNGITALQMDIKIQGITKEIMQVALAQAKEARMHILGKMQEAMAEAKTEVSTFAPRLFTMKINPDKIRDVIGKGGSVIRALTEETGTQINIDEDGTITIASADPAKAEEAKRRIQQITAEVEIGKIYEGPITKILDFGALVNLLPGKDGLLHISQIAHERVEKVTDYLSEGQIVKVKVMETDEKGRIKLSMKVLLDRPGQGGPEHV</sequence>
<comment type="function">
    <text evidence="1">Involved in mRNA degradation. Catalyzes the phosphorolysis of single-stranded polyribonucleotides processively in the 3'- to 5'-direction.</text>
</comment>
<comment type="catalytic activity">
    <reaction evidence="1">
        <text>RNA(n+1) + phosphate = RNA(n) + a ribonucleoside 5'-diphosphate</text>
        <dbReference type="Rhea" id="RHEA:22096"/>
        <dbReference type="Rhea" id="RHEA-COMP:14527"/>
        <dbReference type="Rhea" id="RHEA-COMP:17342"/>
        <dbReference type="ChEBI" id="CHEBI:43474"/>
        <dbReference type="ChEBI" id="CHEBI:57930"/>
        <dbReference type="ChEBI" id="CHEBI:140395"/>
        <dbReference type="EC" id="2.7.7.8"/>
    </reaction>
</comment>
<comment type="cofactor">
    <cofactor evidence="1">
        <name>Mg(2+)</name>
        <dbReference type="ChEBI" id="CHEBI:18420"/>
    </cofactor>
</comment>
<comment type="subcellular location">
    <subcellularLocation>
        <location evidence="1">Cytoplasm</location>
    </subcellularLocation>
</comment>
<comment type="similarity">
    <text evidence="1">Belongs to the polyribonucleotide nucleotidyltransferase family.</text>
</comment>
<dbReference type="EC" id="2.7.7.8" evidence="1"/>
<dbReference type="EMBL" id="CP000267">
    <property type="protein sequence ID" value="ABD69222.1"/>
    <property type="molecule type" value="Genomic_DNA"/>
</dbReference>
<dbReference type="RefSeq" id="WP_011463790.1">
    <property type="nucleotide sequence ID" value="NC_007908.1"/>
</dbReference>
<dbReference type="SMR" id="Q21YD1"/>
<dbReference type="STRING" id="338969.Rfer_1489"/>
<dbReference type="KEGG" id="rfr:Rfer_1489"/>
<dbReference type="eggNOG" id="COG1185">
    <property type="taxonomic scope" value="Bacteria"/>
</dbReference>
<dbReference type="HOGENOM" id="CLU_004217_2_2_4"/>
<dbReference type="OrthoDB" id="9804305at2"/>
<dbReference type="Proteomes" id="UP000008332">
    <property type="component" value="Chromosome"/>
</dbReference>
<dbReference type="GO" id="GO:0005829">
    <property type="term" value="C:cytosol"/>
    <property type="evidence" value="ECO:0007669"/>
    <property type="project" value="TreeGrafter"/>
</dbReference>
<dbReference type="GO" id="GO:0000175">
    <property type="term" value="F:3'-5'-RNA exonuclease activity"/>
    <property type="evidence" value="ECO:0007669"/>
    <property type="project" value="TreeGrafter"/>
</dbReference>
<dbReference type="GO" id="GO:0000287">
    <property type="term" value="F:magnesium ion binding"/>
    <property type="evidence" value="ECO:0007669"/>
    <property type="project" value="UniProtKB-UniRule"/>
</dbReference>
<dbReference type="GO" id="GO:0004654">
    <property type="term" value="F:polyribonucleotide nucleotidyltransferase activity"/>
    <property type="evidence" value="ECO:0007669"/>
    <property type="project" value="UniProtKB-UniRule"/>
</dbReference>
<dbReference type="GO" id="GO:0003723">
    <property type="term" value="F:RNA binding"/>
    <property type="evidence" value="ECO:0007669"/>
    <property type="project" value="UniProtKB-UniRule"/>
</dbReference>
<dbReference type="GO" id="GO:0006402">
    <property type="term" value="P:mRNA catabolic process"/>
    <property type="evidence" value="ECO:0007669"/>
    <property type="project" value="UniProtKB-UniRule"/>
</dbReference>
<dbReference type="GO" id="GO:0006396">
    <property type="term" value="P:RNA processing"/>
    <property type="evidence" value="ECO:0007669"/>
    <property type="project" value="InterPro"/>
</dbReference>
<dbReference type="CDD" id="cd02393">
    <property type="entry name" value="KH-I_PNPase"/>
    <property type="match status" value="1"/>
</dbReference>
<dbReference type="CDD" id="cd11363">
    <property type="entry name" value="RNase_PH_PNPase_1"/>
    <property type="match status" value="1"/>
</dbReference>
<dbReference type="CDD" id="cd11364">
    <property type="entry name" value="RNase_PH_PNPase_2"/>
    <property type="match status" value="1"/>
</dbReference>
<dbReference type="CDD" id="cd04472">
    <property type="entry name" value="S1_PNPase"/>
    <property type="match status" value="1"/>
</dbReference>
<dbReference type="FunFam" id="2.40.50.140:FF:000023">
    <property type="entry name" value="Polyribonucleotide nucleotidyltransferase"/>
    <property type="match status" value="1"/>
</dbReference>
<dbReference type="FunFam" id="3.30.1370.10:FF:000001">
    <property type="entry name" value="Polyribonucleotide nucleotidyltransferase"/>
    <property type="match status" value="1"/>
</dbReference>
<dbReference type="FunFam" id="3.30.230.70:FF:000001">
    <property type="entry name" value="Polyribonucleotide nucleotidyltransferase"/>
    <property type="match status" value="1"/>
</dbReference>
<dbReference type="FunFam" id="3.30.230.70:FF:000002">
    <property type="entry name" value="Polyribonucleotide nucleotidyltransferase"/>
    <property type="match status" value="1"/>
</dbReference>
<dbReference type="Gene3D" id="3.30.230.70">
    <property type="entry name" value="GHMP Kinase, N-terminal domain"/>
    <property type="match status" value="2"/>
</dbReference>
<dbReference type="Gene3D" id="3.30.1370.10">
    <property type="entry name" value="K Homology domain, type 1"/>
    <property type="match status" value="1"/>
</dbReference>
<dbReference type="Gene3D" id="2.40.50.140">
    <property type="entry name" value="Nucleic acid-binding proteins"/>
    <property type="match status" value="1"/>
</dbReference>
<dbReference type="HAMAP" id="MF_01595">
    <property type="entry name" value="PNPase"/>
    <property type="match status" value="1"/>
</dbReference>
<dbReference type="InterPro" id="IPR001247">
    <property type="entry name" value="ExoRNase_PH_dom1"/>
</dbReference>
<dbReference type="InterPro" id="IPR015847">
    <property type="entry name" value="ExoRNase_PH_dom2"/>
</dbReference>
<dbReference type="InterPro" id="IPR036345">
    <property type="entry name" value="ExoRNase_PH_dom2_sf"/>
</dbReference>
<dbReference type="InterPro" id="IPR004087">
    <property type="entry name" value="KH_dom"/>
</dbReference>
<dbReference type="InterPro" id="IPR004088">
    <property type="entry name" value="KH_dom_type_1"/>
</dbReference>
<dbReference type="InterPro" id="IPR036612">
    <property type="entry name" value="KH_dom_type_1_sf"/>
</dbReference>
<dbReference type="InterPro" id="IPR012340">
    <property type="entry name" value="NA-bd_OB-fold"/>
</dbReference>
<dbReference type="InterPro" id="IPR012162">
    <property type="entry name" value="PNPase"/>
</dbReference>
<dbReference type="InterPro" id="IPR027408">
    <property type="entry name" value="PNPase/RNase_PH_dom_sf"/>
</dbReference>
<dbReference type="InterPro" id="IPR015848">
    <property type="entry name" value="PNPase_PH_RNA-bd_bac/org-type"/>
</dbReference>
<dbReference type="InterPro" id="IPR036456">
    <property type="entry name" value="PNPase_PH_RNA-bd_sf"/>
</dbReference>
<dbReference type="InterPro" id="IPR020568">
    <property type="entry name" value="Ribosomal_Su5_D2-typ_SF"/>
</dbReference>
<dbReference type="InterPro" id="IPR003029">
    <property type="entry name" value="S1_domain"/>
</dbReference>
<dbReference type="NCBIfam" id="TIGR03591">
    <property type="entry name" value="polynuc_phos"/>
    <property type="match status" value="1"/>
</dbReference>
<dbReference type="NCBIfam" id="NF008805">
    <property type="entry name" value="PRK11824.1"/>
    <property type="match status" value="1"/>
</dbReference>
<dbReference type="PANTHER" id="PTHR11252">
    <property type="entry name" value="POLYRIBONUCLEOTIDE NUCLEOTIDYLTRANSFERASE"/>
    <property type="match status" value="1"/>
</dbReference>
<dbReference type="PANTHER" id="PTHR11252:SF0">
    <property type="entry name" value="POLYRIBONUCLEOTIDE NUCLEOTIDYLTRANSFERASE 1, MITOCHONDRIAL"/>
    <property type="match status" value="1"/>
</dbReference>
<dbReference type="Pfam" id="PF00013">
    <property type="entry name" value="KH_1"/>
    <property type="match status" value="1"/>
</dbReference>
<dbReference type="Pfam" id="PF03726">
    <property type="entry name" value="PNPase"/>
    <property type="match status" value="1"/>
</dbReference>
<dbReference type="Pfam" id="PF01138">
    <property type="entry name" value="RNase_PH"/>
    <property type="match status" value="2"/>
</dbReference>
<dbReference type="Pfam" id="PF03725">
    <property type="entry name" value="RNase_PH_C"/>
    <property type="match status" value="2"/>
</dbReference>
<dbReference type="Pfam" id="PF00575">
    <property type="entry name" value="S1"/>
    <property type="match status" value="1"/>
</dbReference>
<dbReference type="PIRSF" id="PIRSF005499">
    <property type="entry name" value="PNPase"/>
    <property type="match status" value="1"/>
</dbReference>
<dbReference type="SMART" id="SM00322">
    <property type="entry name" value="KH"/>
    <property type="match status" value="1"/>
</dbReference>
<dbReference type="SMART" id="SM00316">
    <property type="entry name" value="S1"/>
    <property type="match status" value="1"/>
</dbReference>
<dbReference type="SUPFAM" id="SSF54791">
    <property type="entry name" value="Eukaryotic type KH-domain (KH-domain type I)"/>
    <property type="match status" value="1"/>
</dbReference>
<dbReference type="SUPFAM" id="SSF50249">
    <property type="entry name" value="Nucleic acid-binding proteins"/>
    <property type="match status" value="1"/>
</dbReference>
<dbReference type="SUPFAM" id="SSF46915">
    <property type="entry name" value="Polynucleotide phosphorylase/guanosine pentaphosphate synthase (PNPase/GPSI), domain 3"/>
    <property type="match status" value="1"/>
</dbReference>
<dbReference type="SUPFAM" id="SSF55666">
    <property type="entry name" value="Ribonuclease PH domain 2-like"/>
    <property type="match status" value="2"/>
</dbReference>
<dbReference type="SUPFAM" id="SSF54211">
    <property type="entry name" value="Ribosomal protein S5 domain 2-like"/>
    <property type="match status" value="2"/>
</dbReference>
<dbReference type="PROSITE" id="PS50084">
    <property type="entry name" value="KH_TYPE_1"/>
    <property type="match status" value="1"/>
</dbReference>
<dbReference type="PROSITE" id="PS50126">
    <property type="entry name" value="S1"/>
    <property type="match status" value="1"/>
</dbReference>
<proteinExistence type="inferred from homology"/>
<keyword id="KW-0963">Cytoplasm</keyword>
<keyword id="KW-0460">Magnesium</keyword>
<keyword id="KW-0479">Metal-binding</keyword>
<keyword id="KW-0548">Nucleotidyltransferase</keyword>
<keyword id="KW-1185">Reference proteome</keyword>
<keyword id="KW-0694">RNA-binding</keyword>
<keyword id="KW-0808">Transferase</keyword>
<feature type="chain" id="PRO_0000329807" description="Polyribonucleotide nucleotidyltransferase">
    <location>
        <begin position="1"/>
        <end position="706"/>
    </location>
</feature>
<feature type="domain" description="KH" evidence="1">
    <location>
        <begin position="555"/>
        <end position="614"/>
    </location>
</feature>
<feature type="domain" description="S1 motif" evidence="1">
    <location>
        <begin position="624"/>
        <end position="692"/>
    </location>
</feature>
<feature type="binding site" evidence="1">
    <location>
        <position position="488"/>
    </location>
    <ligand>
        <name>Mg(2+)</name>
        <dbReference type="ChEBI" id="CHEBI:18420"/>
    </ligand>
</feature>
<feature type="binding site" evidence="1">
    <location>
        <position position="494"/>
    </location>
    <ligand>
        <name>Mg(2+)</name>
        <dbReference type="ChEBI" id="CHEBI:18420"/>
    </ligand>
</feature>
<gene>
    <name evidence="1" type="primary">pnp</name>
    <name type="ordered locus">Rfer_1489</name>
</gene>
<organism>
    <name type="scientific">Albidiferax ferrireducens (strain ATCC BAA-621 / DSM 15236 / T118)</name>
    <name type="common">Rhodoferax ferrireducens</name>
    <dbReference type="NCBI Taxonomy" id="338969"/>
    <lineage>
        <taxon>Bacteria</taxon>
        <taxon>Pseudomonadati</taxon>
        <taxon>Pseudomonadota</taxon>
        <taxon>Betaproteobacteria</taxon>
        <taxon>Burkholderiales</taxon>
        <taxon>Comamonadaceae</taxon>
        <taxon>Rhodoferax</taxon>
    </lineage>
</organism>
<evidence type="ECO:0000255" key="1">
    <source>
        <dbReference type="HAMAP-Rule" id="MF_01595"/>
    </source>
</evidence>
<reference key="1">
    <citation type="submission" date="2006-02" db="EMBL/GenBank/DDBJ databases">
        <title>Complete sequence of chromosome of Rhodoferax ferrireducens DSM 15236.</title>
        <authorList>
            <person name="Copeland A."/>
            <person name="Lucas S."/>
            <person name="Lapidus A."/>
            <person name="Barry K."/>
            <person name="Detter J.C."/>
            <person name="Glavina del Rio T."/>
            <person name="Hammon N."/>
            <person name="Israni S."/>
            <person name="Pitluck S."/>
            <person name="Brettin T."/>
            <person name="Bruce D."/>
            <person name="Han C."/>
            <person name="Tapia R."/>
            <person name="Gilna P."/>
            <person name="Kiss H."/>
            <person name="Schmutz J."/>
            <person name="Larimer F."/>
            <person name="Land M."/>
            <person name="Kyrpides N."/>
            <person name="Ivanova N."/>
            <person name="Richardson P."/>
        </authorList>
    </citation>
    <scope>NUCLEOTIDE SEQUENCE [LARGE SCALE GENOMIC DNA]</scope>
    <source>
        <strain>ATCC BAA-621 / DSM 15236 / T118</strain>
    </source>
</reference>
<protein>
    <recommendedName>
        <fullName evidence="1">Polyribonucleotide nucleotidyltransferase</fullName>
        <ecNumber evidence="1">2.7.7.8</ecNumber>
    </recommendedName>
    <alternativeName>
        <fullName evidence="1">Polynucleotide phosphorylase</fullName>
        <shortName evidence="1">PNPase</shortName>
    </alternativeName>
</protein>